<reference key="1">
    <citation type="journal article" date="2015" name="PLoS Genet.">
        <title>The dynamic genome and transcriptome of the human fungal pathogen Blastomyces and close relative Emmonsia.</title>
        <authorList>
            <person name="Munoz J.F."/>
            <person name="Gauthier G.M."/>
            <person name="Desjardins C.A."/>
            <person name="Gallo J.E."/>
            <person name="Holder J."/>
            <person name="Sullivan T.D."/>
            <person name="Marty A.J."/>
            <person name="Carmen J.C."/>
            <person name="Chen Z."/>
            <person name="Ding L."/>
            <person name="Gujja S."/>
            <person name="Magrini V."/>
            <person name="Misas E."/>
            <person name="Mitreva M."/>
            <person name="Priest M."/>
            <person name="Saif S."/>
            <person name="Whiston E.A."/>
            <person name="Young S."/>
            <person name="Zeng Q."/>
            <person name="Goldman W.E."/>
            <person name="Mardis E.R."/>
            <person name="Taylor J.W."/>
            <person name="McEwen J.G."/>
            <person name="Clay O.K."/>
            <person name="Klein B.S."/>
            <person name="Cuomo C.A."/>
        </authorList>
    </citation>
    <scope>NUCLEOTIDE SEQUENCE [LARGE SCALE GENOMIC DNA]</scope>
    <source>
        <strain>SLH14081</strain>
    </source>
</reference>
<dbReference type="EC" id="3.4.-.-" evidence="6"/>
<dbReference type="EMBL" id="GG657455">
    <property type="protein sequence ID" value="OAT08823.1"/>
    <property type="molecule type" value="Genomic_DNA"/>
</dbReference>
<dbReference type="RefSeq" id="XP_002625187.1">
    <property type="nucleotide sequence ID" value="XM_002625141.2"/>
</dbReference>
<dbReference type="SMR" id="C5JPM9"/>
<dbReference type="STRING" id="559298.C5JPM9"/>
<dbReference type="GeneID" id="8504650"/>
<dbReference type="KEGG" id="bgh:BDBG_05051"/>
<dbReference type="VEuPathDB" id="FungiDB:BDBG_05051"/>
<dbReference type="HOGENOM" id="CLU_006412_1_0_1"/>
<dbReference type="OrthoDB" id="10257471at2759"/>
<dbReference type="Proteomes" id="UP000002038">
    <property type="component" value="Unassembled WGS sequence"/>
</dbReference>
<dbReference type="GO" id="GO:0005774">
    <property type="term" value="C:vacuolar membrane"/>
    <property type="evidence" value="ECO:0007669"/>
    <property type="project" value="UniProtKB-SubCell"/>
</dbReference>
<dbReference type="GO" id="GO:0046872">
    <property type="term" value="F:metal ion binding"/>
    <property type="evidence" value="ECO:0007669"/>
    <property type="project" value="UniProtKB-KW"/>
</dbReference>
<dbReference type="GO" id="GO:0008235">
    <property type="term" value="F:metalloexopeptidase activity"/>
    <property type="evidence" value="ECO:0007669"/>
    <property type="project" value="InterPro"/>
</dbReference>
<dbReference type="GO" id="GO:0006508">
    <property type="term" value="P:proteolysis"/>
    <property type="evidence" value="ECO:0007669"/>
    <property type="project" value="UniProtKB-KW"/>
</dbReference>
<dbReference type="CDD" id="cd03875">
    <property type="entry name" value="M28_Fxna_like"/>
    <property type="match status" value="1"/>
</dbReference>
<dbReference type="FunFam" id="3.40.630.10:FF:000057">
    <property type="entry name" value="Vacuolar membrane protease"/>
    <property type="match status" value="1"/>
</dbReference>
<dbReference type="Gene3D" id="3.40.630.10">
    <property type="entry name" value="Zn peptidases"/>
    <property type="match status" value="1"/>
</dbReference>
<dbReference type="InterPro" id="IPR048024">
    <property type="entry name" value="Fxna-like_M28_dom"/>
</dbReference>
<dbReference type="InterPro" id="IPR045175">
    <property type="entry name" value="M28_fam"/>
</dbReference>
<dbReference type="InterPro" id="IPR007484">
    <property type="entry name" value="Peptidase_M28"/>
</dbReference>
<dbReference type="InterPro" id="IPR053975">
    <property type="entry name" value="PFF1_C"/>
</dbReference>
<dbReference type="InterPro" id="IPR053976">
    <property type="entry name" value="PFF1_TM"/>
</dbReference>
<dbReference type="PANTHER" id="PTHR12147">
    <property type="entry name" value="METALLOPEPTIDASE M28 FAMILY MEMBER"/>
    <property type="match status" value="1"/>
</dbReference>
<dbReference type="PANTHER" id="PTHR12147:SF58">
    <property type="entry name" value="VACUOLAR MEMBRANE PROTEASE"/>
    <property type="match status" value="1"/>
</dbReference>
<dbReference type="Pfam" id="PF04389">
    <property type="entry name" value="Peptidase_M28"/>
    <property type="match status" value="1"/>
</dbReference>
<dbReference type="Pfam" id="PF22250">
    <property type="entry name" value="PFF1_C"/>
    <property type="match status" value="1"/>
</dbReference>
<dbReference type="Pfam" id="PF22251">
    <property type="entry name" value="PFF1_TM"/>
    <property type="match status" value="1"/>
</dbReference>
<dbReference type="SUPFAM" id="SSF53187">
    <property type="entry name" value="Zn-dependent exopeptidases"/>
    <property type="match status" value="1"/>
</dbReference>
<proteinExistence type="inferred from homology"/>
<keyword id="KW-0325">Glycoprotein</keyword>
<keyword id="KW-0378">Hydrolase</keyword>
<keyword id="KW-0472">Membrane</keyword>
<keyword id="KW-0479">Metal-binding</keyword>
<keyword id="KW-0482">Metalloprotease</keyword>
<keyword id="KW-0645">Protease</keyword>
<keyword id="KW-1185">Reference proteome</keyword>
<keyword id="KW-0812">Transmembrane</keyword>
<keyword id="KW-1133">Transmembrane helix</keyword>
<keyword id="KW-0926">Vacuole</keyword>
<keyword id="KW-0862">Zinc</keyword>
<evidence type="ECO:0000250" key="1">
    <source>
        <dbReference type="UniProtKB" id="P38244"/>
    </source>
</evidence>
<evidence type="ECO:0000250" key="2">
    <source>
        <dbReference type="UniProtKB" id="P80561"/>
    </source>
</evidence>
<evidence type="ECO:0000255" key="3"/>
<evidence type="ECO:0000255" key="4">
    <source>
        <dbReference type="PROSITE-ProRule" id="PRU00498"/>
    </source>
</evidence>
<evidence type="ECO:0000256" key="5">
    <source>
        <dbReference type="SAM" id="MobiDB-lite"/>
    </source>
</evidence>
<evidence type="ECO:0000305" key="6"/>
<name>PFF1_BLAGS</name>
<organism>
    <name type="scientific">Blastomyces gilchristii (strain SLH14081)</name>
    <name type="common">Blastomyces dermatitidis</name>
    <dbReference type="NCBI Taxonomy" id="559298"/>
    <lineage>
        <taxon>Eukaryota</taxon>
        <taxon>Fungi</taxon>
        <taxon>Dikarya</taxon>
        <taxon>Ascomycota</taxon>
        <taxon>Pezizomycotina</taxon>
        <taxon>Eurotiomycetes</taxon>
        <taxon>Eurotiomycetidae</taxon>
        <taxon>Onygenales</taxon>
        <taxon>Ajellomycetaceae</taxon>
        <taxon>Blastomyces</taxon>
    </lineage>
</organism>
<protein>
    <recommendedName>
        <fullName evidence="1">Vacuolar membrane protease</fullName>
        <ecNumber evidence="6">3.4.-.-</ecNumber>
    </recommendedName>
    <alternativeName>
        <fullName evidence="1">FXNA-related family protease 1</fullName>
    </alternativeName>
</protein>
<comment type="function">
    <text evidence="1">May be involved in vacuolar sorting and osmoregulation.</text>
</comment>
<comment type="cofactor">
    <cofactor evidence="2">
        <name>Zn(2+)</name>
        <dbReference type="ChEBI" id="CHEBI:29105"/>
    </cofactor>
    <text evidence="2">Binds 2 Zn(2+) ions per subunit.</text>
</comment>
<comment type="subcellular location">
    <subcellularLocation>
        <location evidence="1">Vacuole membrane</location>
        <topology evidence="3">Multi-pass membrane protein</topology>
    </subcellularLocation>
</comment>
<comment type="similarity">
    <text evidence="6">Belongs to the peptidase M28 family.</text>
</comment>
<accession>C5JPM9</accession>
<accession>A0A179ULY6</accession>
<gene>
    <name type="ORF">BDBG_05051</name>
</gene>
<sequence>MATPRAQKFNPIAFTPGPVTLITTIVYLALLIPILVISLVVPPAPETSPEGVNLTEAWRDLQHLTGGFHPYNSRRNDDVHQWLLRRIDSILRPTVEAGERPSANNDIPDVFVFDDNQSNLTYSNGGVGKAAIVGVYFEGTNIIVYIRGTEDDPENWWERSNGKPKGKGGVLVNAHYDSVSTGYGATDNGMGVVSLLQLLKYFTTPGNKPRKGLVLLFNNGEEDYLNGAHVFSQHPLSNFTHTFLNLEGAGAGGRAALFRTTDTEVTRFYQNAKHPFGSVLAADGFKMGLLRSQTDYVVFNGILGLRGLDLAFIAPRSRYHTDQDDARHTSVDSLWHMLSAAIGTTEGLVSYTGTDFDGKSQGLDKVNSGTGTLGVWFDMFGSAFAVFRLHTLFALSVTLLIVAPLVIFITAIVLSKTDRMYLFSMSKSLGGTDERVSLRGLRGLFRTPIILAVATVIPIGLAYLLEKVNPYIVHSSQFSVWSMMISVWIFLAWFLACAADFFRPSALHRAYSYTWIFIATWVMLVINTVYANQKGIAAGYFVFFYFSGSFLATWVSYLELFALPRKGDFARQAIMHSGRPPSSLRSRLLTPSADELPSDTGPHAEYPGDADETDPTESTSLLRGQRTTFANYRTGGTDGVVEGTDEGPSFKHEQSWSWTLPRWTWVLQLLLLAPIVLILVGQLALFLTTSMSQVGSDGVSTFIVYLACAVFTTLLFAPLFPFIHRFTYHIPTFLFLVFVGTLIYNLVAFPFSPANRLKMFFIQEVNLDDGSNTVSLSGIQPYLTDAINSIPSAAGQNITCDQSAFGKLEKCSWAGLPPRVLGQDHDRDTGIVSSDWMSYNITKTVGENKARIEISGRNTRACKLKFDKPVADFQVSGSAVDHRMPHTSGQGVAEIRLWSRTWDRTWVVDICWHDSHDKPEDDDGDDEKQDAPRNGLSGKVICLWSDSNQSDVIPALDELRLYTPNWVAISKSADGLVEASHGITIQ</sequence>
<feature type="chain" id="PRO_0000411693" description="Vacuolar membrane protease">
    <location>
        <begin position="1"/>
        <end position="986"/>
    </location>
</feature>
<feature type="topological domain" description="Cytoplasmic" evidence="1">
    <location>
        <begin position="1"/>
        <end position="20"/>
    </location>
</feature>
<feature type="transmembrane region" description="Helical; Name=1" evidence="3">
    <location>
        <begin position="21"/>
        <end position="41"/>
    </location>
</feature>
<feature type="topological domain" description="Vacuolar" evidence="1">
    <location>
        <begin position="42"/>
        <end position="392"/>
    </location>
</feature>
<feature type="transmembrane region" description="Helical; Name=2" evidence="3">
    <location>
        <begin position="393"/>
        <end position="413"/>
    </location>
</feature>
<feature type="topological domain" description="Cytoplasmic" evidence="1">
    <location>
        <begin position="414"/>
        <end position="447"/>
    </location>
</feature>
<feature type="transmembrane region" description="Helical; Name=3" evidence="3">
    <location>
        <begin position="448"/>
        <end position="468"/>
    </location>
</feature>
<feature type="topological domain" description="Vacuolar" evidence="1">
    <location>
        <begin position="469"/>
        <end position="477"/>
    </location>
</feature>
<feature type="transmembrane region" description="Helical; Name=4" evidence="3">
    <location>
        <begin position="478"/>
        <end position="498"/>
    </location>
</feature>
<feature type="topological domain" description="Cytoplasmic" evidence="1">
    <location>
        <begin position="499"/>
        <end position="509"/>
    </location>
</feature>
<feature type="transmembrane region" description="Helical; Name=5" evidence="3">
    <location>
        <begin position="510"/>
        <end position="530"/>
    </location>
</feature>
<feature type="topological domain" description="Vacuolar" evidence="1">
    <location>
        <begin position="531"/>
        <end position="534"/>
    </location>
</feature>
<feature type="transmembrane region" description="Helical; Name=6" evidence="3">
    <location>
        <begin position="535"/>
        <end position="555"/>
    </location>
</feature>
<feature type="topological domain" description="Cytoplasmic" evidence="1">
    <location>
        <begin position="556"/>
        <end position="665"/>
    </location>
</feature>
<feature type="transmembrane region" description="Helical; Name=7" evidence="3">
    <location>
        <begin position="666"/>
        <end position="686"/>
    </location>
</feature>
<feature type="topological domain" description="Vacuolar" evidence="1">
    <location>
        <begin position="687"/>
        <end position="702"/>
    </location>
</feature>
<feature type="transmembrane region" description="Helical; Name=8" evidence="3">
    <location>
        <begin position="703"/>
        <end position="723"/>
    </location>
</feature>
<feature type="topological domain" description="Cytoplasmic" evidence="1">
    <location>
        <begin position="724"/>
        <end position="729"/>
    </location>
</feature>
<feature type="transmembrane region" description="Helical; Name=9" evidence="3">
    <location>
        <begin position="730"/>
        <end position="750"/>
    </location>
</feature>
<feature type="topological domain" description="Vacuolar" evidence="1">
    <location>
        <begin position="751"/>
        <end position="986"/>
    </location>
</feature>
<feature type="region of interest" description="Disordered" evidence="5">
    <location>
        <begin position="595"/>
        <end position="620"/>
    </location>
</feature>
<feature type="active site" description="Proton acceptor" evidence="2">
    <location>
        <position position="221"/>
    </location>
</feature>
<feature type="binding site" evidence="2">
    <location>
        <position position="175"/>
    </location>
    <ligand>
        <name>Zn(2+)</name>
        <dbReference type="ChEBI" id="CHEBI:29105"/>
        <label>1</label>
        <note>catalytic</note>
    </ligand>
</feature>
<feature type="binding site" evidence="2">
    <location>
        <position position="187"/>
    </location>
    <ligand>
        <name>Zn(2+)</name>
        <dbReference type="ChEBI" id="CHEBI:29105"/>
        <label>1</label>
        <note>catalytic</note>
    </ligand>
</feature>
<feature type="binding site" evidence="2">
    <location>
        <position position="187"/>
    </location>
    <ligand>
        <name>Zn(2+)</name>
        <dbReference type="ChEBI" id="CHEBI:29105"/>
        <label>2</label>
        <note>catalytic</note>
    </ligand>
</feature>
<feature type="binding site" evidence="2">
    <location>
        <position position="222"/>
    </location>
    <ligand>
        <name>Zn(2+)</name>
        <dbReference type="ChEBI" id="CHEBI:29105"/>
        <label>2</label>
        <note>catalytic</note>
    </ligand>
</feature>
<feature type="binding site" evidence="2">
    <location>
        <position position="247"/>
    </location>
    <ligand>
        <name>Zn(2+)</name>
        <dbReference type="ChEBI" id="CHEBI:29105"/>
        <label>1</label>
        <note>catalytic</note>
    </ligand>
</feature>
<feature type="binding site" evidence="2">
    <location>
        <position position="320"/>
    </location>
    <ligand>
        <name>Zn(2+)</name>
        <dbReference type="ChEBI" id="CHEBI:29105"/>
        <label>2</label>
        <note>catalytic</note>
    </ligand>
</feature>
<feature type="site" description="Transition state stabilizer" evidence="2">
    <location>
        <position position="319"/>
    </location>
</feature>
<feature type="glycosylation site" description="N-linked (GlcNAc...) asparagine" evidence="4">
    <location>
        <position position="53"/>
    </location>
</feature>
<feature type="glycosylation site" description="N-linked (GlcNAc...) asparagine" evidence="4">
    <location>
        <position position="116"/>
    </location>
</feature>
<feature type="glycosylation site" description="N-linked (GlcNAc...) asparagine" evidence="4">
    <location>
        <position position="119"/>
    </location>
</feature>
<feature type="glycosylation site" description="N-linked (GlcNAc...) asparagine" evidence="4">
    <location>
        <position position="238"/>
    </location>
</feature>
<feature type="glycosylation site" description="N-linked (GlcNAc...) asparagine" evidence="4">
    <location>
        <position position="797"/>
    </location>
</feature>
<feature type="glycosylation site" description="N-linked (GlcNAc...) asparagine" evidence="4">
    <location>
        <position position="840"/>
    </location>
</feature>
<feature type="glycosylation site" description="N-linked (GlcNAc...) asparagine" evidence="4">
    <location>
        <position position="948"/>
    </location>
</feature>